<accession>Q9AA39</accession>
<reference key="1">
    <citation type="journal article" date="2001" name="Proc. Natl. Acad. Sci. U.S.A.">
        <title>Complete genome sequence of Caulobacter crescentus.</title>
        <authorList>
            <person name="Nierman W.C."/>
            <person name="Feldblyum T.V."/>
            <person name="Laub M.T."/>
            <person name="Paulsen I.T."/>
            <person name="Nelson K.E."/>
            <person name="Eisen J.A."/>
            <person name="Heidelberg J.F."/>
            <person name="Alley M.R.K."/>
            <person name="Ohta N."/>
            <person name="Maddock J.R."/>
            <person name="Potocka I."/>
            <person name="Nelson W.C."/>
            <person name="Newton A."/>
            <person name="Stephens C."/>
            <person name="Phadke N.D."/>
            <person name="Ely B."/>
            <person name="DeBoy R.T."/>
            <person name="Dodson R.J."/>
            <person name="Durkin A.S."/>
            <person name="Gwinn M.L."/>
            <person name="Haft D.H."/>
            <person name="Kolonay J.F."/>
            <person name="Smit J."/>
            <person name="Craven M.B."/>
            <person name="Khouri H.M."/>
            <person name="Shetty J."/>
            <person name="Berry K.J."/>
            <person name="Utterback T.R."/>
            <person name="Tran K."/>
            <person name="Wolf A.M."/>
            <person name="Vamathevan J.J."/>
            <person name="Ermolaeva M.D."/>
            <person name="White O."/>
            <person name="Salzberg S.L."/>
            <person name="Venter J.C."/>
            <person name="Shapiro L."/>
            <person name="Fraser C.M."/>
        </authorList>
    </citation>
    <scope>NUCLEOTIDE SEQUENCE [LARGE SCALE GENOMIC DNA]</scope>
    <source>
        <strain>ATCC 19089 / CIP 103742 / CB 15</strain>
    </source>
</reference>
<proteinExistence type="inferred from homology"/>
<evidence type="ECO:0000255" key="1">
    <source>
        <dbReference type="HAMAP-Rule" id="MF_00227"/>
    </source>
</evidence>
<evidence type="ECO:0000256" key="2">
    <source>
        <dbReference type="SAM" id="MobiDB-lite"/>
    </source>
</evidence>
<name>RNPA_CAUVC</name>
<sequence>MAEAPHTLKFERLRKRPDFLLAAKAPALSRGAVFIQMRQRTDDDPTVRVGFTATKKIGGAVERNRAKRRLREAARLVLPLHARPSHDYVFIARGGTGTREWARLLDDVKTALISLAADLDRGGTKVSRRSNGALHDAAPSSQPDPTVSG</sequence>
<comment type="function">
    <text evidence="1">RNaseP catalyzes the removal of the 5'-leader sequence from pre-tRNA to produce the mature 5'-terminus. It can also cleave other RNA substrates such as 4.5S RNA. The protein component plays an auxiliary but essential role in vivo by binding to the 5'-leader sequence and broadening the substrate specificity of the ribozyme.</text>
</comment>
<comment type="catalytic activity">
    <reaction evidence="1">
        <text>Endonucleolytic cleavage of RNA, removing 5'-extranucleotides from tRNA precursor.</text>
        <dbReference type="EC" id="3.1.26.5"/>
    </reaction>
</comment>
<comment type="subunit">
    <text evidence="1">Consists of a catalytic RNA component (M1 or rnpB) and a protein subunit.</text>
</comment>
<comment type="similarity">
    <text evidence="1">Belongs to the RnpA family.</text>
</comment>
<protein>
    <recommendedName>
        <fullName evidence="1">Ribonuclease P protein component</fullName>
        <shortName evidence="1">RNase P protein</shortName>
        <shortName evidence="1">RNaseP protein</shortName>
        <ecNumber evidence="1">3.1.26.5</ecNumber>
    </recommendedName>
    <alternativeName>
        <fullName evidence="1">Protein C5</fullName>
    </alternativeName>
</protein>
<organism>
    <name type="scientific">Caulobacter vibrioides (strain ATCC 19089 / CIP 103742 / CB 15)</name>
    <name type="common">Caulobacter crescentus</name>
    <dbReference type="NCBI Taxonomy" id="190650"/>
    <lineage>
        <taxon>Bacteria</taxon>
        <taxon>Pseudomonadati</taxon>
        <taxon>Pseudomonadota</taxon>
        <taxon>Alphaproteobacteria</taxon>
        <taxon>Caulobacterales</taxon>
        <taxon>Caulobacteraceae</taxon>
        <taxon>Caulobacter</taxon>
    </lineage>
</organism>
<dbReference type="EC" id="3.1.26.5" evidence="1"/>
<dbReference type="EMBL" id="AE005673">
    <property type="protein sequence ID" value="AAK22753.1"/>
    <property type="molecule type" value="Genomic_DNA"/>
</dbReference>
<dbReference type="PIR" id="E87344">
    <property type="entry name" value="E87344"/>
</dbReference>
<dbReference type="RefSeq" id="NP_419585.1">
    <property type="nucleotide sequence ID" value="NC_002696.2"/>
</dbReference>
<dbReference type="RefSeq" id="WP_010918654.1">
    <property type="nucleotide sequence ID" value="NC_002696.2"/>
</dbReference>
<dbReference type="SMR" id="Q9AA39"/>
<dbReference type="STRING" id="190650.CC_0768"/>
<dbReference type="EnsemblBacteria" id="AAK22753">
    <property type="protein sequence ID" value="AAK22753"/>
    <property type="gene ID" value="CC_0768"/>
</dbReference>
<dbReference type="KEGG" id="ccr:CC_0768"/>
<dbReference type="PATRIC" id="fig|190650.5.peg.779"/>
<dbReference type="eggNOG" id="COG0594">
    <property type="taxonomic scope" value="Bacteria"/>
</dbReference>
<dbReference type="HOGENOM" id="CLU_117179_6_0_5"/>
<dbReference type="BioCyc" id="CAULO:CC0768-MONOMER"/>
<dbReference type="Proteomes" id="UP000001816">
    <property type="component" value="Chromosome"/>
</dbReference>
<dbReference type="GO" id="GO:0030677">
    <property type="term" value="C:ribonuclease P complex"/>
    <property type="evidence" value="ECO:0007669"/>
    <property type="project" value="TreeGrafter"/>
</dbReference>
<dbReference type="GO" id="GO:0042781">
    <property type="term" value="F:3'-tRNA processing endoribonuclease activity"/>
    <property type="evidence" value="ECO:0007669"/>
    <property type="project" value="TreeGrafter"/>
</dbReference>
<dbReference type="GO" id="GO:0004526">
    <property type="term" value="F:ribonuclease P activity"/>
    <property type="evidence" value="ECO:0007669"/>
    <property type="project" value="UniProtKB-UniRule"/>
</dbReference>
<dbReference type="GO" id="GO:0000049">
    <property type="term" value="F:tRNA binding"/>
    <property type="evidence" value="ECO:0007669"/>
    <property type="project" value="UniProtKB-UniRule"/>
</dbReference>
<dbReference type="GO" id="GO:0001682">
    <property type="term" value="P:tRNA 5'-leader removal"/>
    <property type="evidence" value="ECO:0007669"/>
    <property type="project" value="UniProtKB-UniRule"/>
</dbReference>
<dbReference type="Gene3D" id="3.30.230.10">
    <property type="match status" value="1"/>
</dbReference>
<dbReference type="HAMAP" id="MF_00227">
    <property type="entry name" value="RNase_P"/>
    <property type="match status" value="1"/>
</dbReference>
<dbReference type="InterPro" id="IPR020568">
    <property type="entry name" value="Ribosomal_Su5_D2-typ_SF"/>
</dbReference>
<dbReference type="InterPro" id="IPR014721">
    <property type="entry name" value="Ribsml_uS5_D2-typ_fold_subgr"/>
</dbReference>
<dbReference type="InterPro" id="IPR000100">
    <property type="entry name" value="RNase_P"/>
</dbReference>
<dbReference type="InterPro" id="IPR020539">
    <property type="entry name" value="RNase_P_CS"/>
</dbReference>
<dbReference type="NCBIfam" id="TIGR00188">
    <property type="entry name" value="rnpA"/>
    <property type="match status" value="1"/>
</dbReference>
<dbReference type="PANTHER" id="PTHR33992">
    <property type="entry name" value="RIBONUCLEASE P PROTEIN COMPONENT"/>
    <property type="match status" value="1"/>
</dbReference>
<dbReference type="PANTHER" id="PTHR33992:SF1">
    <property type="entry name" value="RIBONUCLEASE P PROTEIN COMPONENT"/>
    <property type="match status" value="1"/>
</dbReference>
<dbReference type="Pfam" id="PF00825">
    <property type="entry name" value="Ribonuclease_P"/>
    <property type="match status" value="1"/>
</dbReference>
<dbReference type="SUPFAM" id="SSF54211">
    <property type="entry name" value="Ribosomal protein S5 domain 2-like"/>
    <property type="match status" value="1"/>
</dbReference>
<dbReference type="PROSITE" id="PS00648">
    <property type="entry name" value="RIBONUCLEASE_P"/>
    <property type="match status" value="1"/>
</dbReference>
<gene>
    <name evidence="1" type="primary">rnpA</name>
    <name type="ordered locus">CC_0768</name>
</gene>
<feature type="chain" id="PRO_0000198443" description="Ribonuclease P protein component">
    <location>
        <begin position="1"/>
        <end position="149"/>
    </location>
</feature>
<feature type="region of interest" description="Disordered" evidence="2">
    <location>
        <begin position="123"/>
        <end position="149"/>
    </location>
</feature>
<feature type="compositionally biased region" description="Polar residues" evidence="2">
    <location>
        <begin position="139"/>
        <end position="149"/>
    </location>
</feature>
<keyword id="KW-0255">Endonuclease</keyword>
<keyword id="KW-0378">Hydrolase</keyword>
<keyword id="KW-0540">Nuclease</keyword>
<keyword id="KW-1185">Reference proteome</keyword>
<keyword id="KW-0694">RNA-binding</keyword>
<keyword id="KW-0819">tRNA processing</keyword>